<reference key="1">
    <citation type="journal article" date="2000" name="Nature">
        <title>Genome sequence of the endocellular bacterial symbiont of aphids Buchnera sp. APS.</title>
        <authorList>
            <person name="Shigenobu S."/>
            <person name="Watanabe H."/>
            <person name="Hattori M."/>
            <person name="Sakaki Y."/>
            <person name="Ishikawa H."/>
        </authorList>
    </citation>
    <scope>NUCLEOTIDE SEQUENCE [LARGE SCALE GENOMIC DNA]</scope>
    <source>
        <strain>APS</strain>
    </source>
</reference>
<keyword id="KW-0067">ATP-binding</keyword>
<keyword id="KW-0963">Cytoplasm</keyword>
<keyword id="KW-0418">Kinase</keyword>
<keyword id="KW-0520">NAD</keyword>
<keyword id="KW-0521">NADP</keyword>
<keyword id="KW-0547">Nucleotide-binding</keyword>
<keyword id="KW-1185">Reference proteome</keyword>
<keyword id="KW-0808">Transferase</keyword>
<dbReference type="EC" id="2.7.1.23" evidence="1"/>
<dbReference type="EMBL" id="BA000003">
    <property type="protein sequence ID" value="BAB12902.1"/>
    <property type="molecule type" value="Genomic_DNA"/>
</dbReference>
<dbReference type="RefSeq" id="NP_240016.1">
    <property type="nucleotide sequence ID" value="NC_002528.1"/>
</dbReference>
<dbReference type="RefSeq" id="WP_009874142.1">
    <property type="nucleotide sequence ID" value="NC_002528.1"/>
</dbReference>
<dbReference type="SMR" id="P57282"/>
<dbReference type="STRING" id="563178.BUAP5A_182"/>
<dbReference type="EnsemblBacteria" id="BAB12902">
    <property type="protein sequence ID" value="BAB12902"/>
    <property type="gene ID" value="BAB12902"/>
</dbReference>
<dbReference type="KEGG" id="buc:BU185"/>
<dbReference type="PATRIC" id="fig|107806.10.peg.196"/>
<dbReference type="eggNOG" id="COG0061">
    <property type="taxonomic scope" value="Bacteria"/>
</dbReference>
<dbReference type="HOGENOM" id="CLU_008831_0_1_6"/>
<dbReference type="Proteomes" id="UP000001806">
    <property type="component" value="Chromosome"/>
</dbReference>
<dbReference type="GO" id="GO:0005737">
    <property type="term" value="C:cytoplasm"/>
    <property type="evidence" value="ECO:0007669"/>
    <property type="project" value="UniProtKB-SubCell"/>
</dbReference>
<dbReference type="GO" id="GO:0005524">
    <property type="term" value="F:ATP binding"/>
    <property type="evidence" value="ECO:0007669"/>
    <property type="project" value="UniProtKB-KW"/>
</dbReference>
<dbReference type="GO" id="GO:0046872">
    <property type="term" value="F:metal ion binding"/>
    <property type="evidence" value="ECO:0007669"/>
    <property type="project" value="UniProtKB-UniRule"/>
</dbReference>
<dbReference type="GO" id="GO:0051287">
    <property type="term" value="F:NAD binding"/>
    <property type="evidence" value="ECO:0007669"/>
    <property type="project" value="UniProtKB-ARBA"/>
</dbReference>
<dbReference type="GO" id="GO:0003951">
    <property type="term" value="F:NAD+ kinase activity"/>
    <property type="evidence" value="ECO:0007669"/>
    <property type="project" value="UniProtKB-UniRule"/>
</dbReference>
<dbReference type="GO" id="GO:0019674">
    <property type="term" value="P:NAD metabolic process"/>
    <property type="evidence" value="ECO:0007669"/>
    <property type="project" value="InterPro"/>
</dbReference>
<dbReference type="GO" id="GO:0006741">
    <property type="term" value="P:NADP biosynthetic process"/>
    <property type="evidence" value="ECO:0007669"/>
    <property type="project" value="UniProtKB-UniRule"/>
</dbReference>
<dbReference type="FunFam" id="2.60.200.30:FF:000001">
    <property type="entry name" value="NAD kinase"/>
    <property type="match status" value="1"/>
</dbReference>
<dbReference type="Gene3D" id="3.40.50.10330">
    <property type="entry name" value="Probable inorganic polyphosphate/atp-NAD kinase, domain 1"/>
    <property type="match status" value="1"/>
</dbReference>
<dbReference type="Gene3D" id="2.60.200.30">
    <property type="entry name" value="Probable inorganic polyphosphate/atp-NAD kinase, domain 2"/>
    <property type="match status" value="1"/>
</dbReference>
<dbReference type="HAMAP" id="MF_00361">
    <property type="entry name" value="NAD_kinase"/>
    <property type="match status" value="1"/>
</dbReference>
<dbReference type="InterPro" id="IPR017438">
    <property type="entry name" value="ATP-NAD_kinase_N"/>
</dbReference>
<dbReference type="InterPro" id="IPR017437">
    <property type="entry name" value="ATP-NAD_kinase_PpnK-typ_C"/>
</dbReference>
<dbReference type="InterPro" id="IPR016064">
    <property type="entry name" value="NAD/diacylglycerol_kinase_sf"/>
</dbReference>
<dbReference type="InterPro" id="IPR002504">
    <property type="entry name" value="NADK"/>
</dbReference>
<dbReference type="NCBIfam" id="NF002306">
    <property type="entry name" value="PRK01231.1"/>
    <property type="match status" value="1"/>
</dbReference>
<dbReference type="NCBIfam" id="NF002893">
    <property type="entry name" value="PRK03378.1"/>
    <property type="match status" value="1"/>
</dbReference>
<dbReference type="PANTHER" id="PTHR20275">
    <property type="entry name" value="NAD KINASE"/>
    <property type="match status" value="1"/>
</dbReference>
<dbReference type="PANTHER" id="PTHR20275:SF0">
    <property type="entry name" value="NAD KINASE"/>
    <property type="match status" value="1"/>
</dbReference>
<dbReference type="Pfam" id="PF01513">
    <property type="entry name" value="NAD_kinase"/>
    <property type="match status" value="1"/>
</dbReference>
<dbReference type="Pfam" id="PF20143">
    <property type="entry name" value="NAD_kinase_C"/>
    <property type="match status" value="1"/>
</dbReference>
<dbReference type="SUPFAM" id="SSF111331">
    <property type="entry name" value="NAD kinase/diacylglycerol kinase-like"/>
    <property type="match status" value="1"/>
</dbReference>
<organism>
    <name type="scientific">Buchnera aphidicola subsp. Acyrthosiphon pisum (strain APS)</name>
    <name type="common">Acyrthosiphon pisum symbiotic bacterium</name>
    <dbReference type="NCBI Taxonomy" id="107806"/>
    <lineage>
        <taxon>Bacteria</taxon>
        <taxon>Pseudomonadati</taxon>
        <taxon>Pseudomonadota</taxon>
        <taxon>Gammaproteobacteria</taxon>
        <taxon>Enterobacterales</taxon>
        <taxon>Erwiniaceae</taxon>
        <taxon>Buchnera</taxon>
    </lineage>
</organism>
<evidence type="ECO:0000255" key="1">
    <source>
        <dbReference type="HAMAP-Rule" id="MF_00361"/>
    </source>
</evidence>
<gene>
    <name evidence="1" type="primary">nadK</name>
    <name type="ordered locus">BU185</name>
</gene>
<sequence length="292" mass="32576">MKQHFTCIGIVGRPRHDSALITHKTLYEWLIKNGYKVFIEHTVARELKLNNPNTATLIEIGEFCDLAVVIGGDGNLLCAARVLSFYNIKIIGINRGNLGFLADLNPDTGLKKLSEVLSGNYSLENRFLLDAQVCQKKIISRSSIAINEVVLHTKNLAHMIEFEVYIDNKFSFSQRADGLIVSTPTGSTGYSLSAGGPIIAASLDAIVLVPMFPHTLSARPLVIHSDSIICLKFSNIQTNLKISCDSQIILTIKKGECVFIRRSCYYLNLIHPKSYNYFKTLTSKLSWSKKFF</sequence>
<feature type="chain" id="PRO_0000120605" description="NAD kinase">
    <location>
        <begin position="1"/>
        <end position="292"/>
    </location>
</feature>
<feature type="active site" description="Proton acceptor" evidence="1">
    <location>
        <position position="73"/>
    </location>
</feature>
<feature type="binding site" evidence="1">
    <location>
        <begin position="73"/>
        <end position="74"/>
    </location>
    <ligand>
        <name>NAD(+)</name>
        <dbReference type="ChEBI" id="CHEBI:57540"/>
    </ligand>
</feature>
<feature type="binding site" evidence="1">
    <location>
        <begin position="147"/>
        <end position="148"/>
    </location>
    <ligand>
        <name>NAD(+)</name>
        <dbReference type="ChEBI" id="CHEBI:57540"/>
    </ligand>
</feature>
<feature type="binding site" evidence="1">
    <location>
        <position position="158"/>
    </location>
    <ligand>
        <name>NAD(+)</name>
        <dbReference type="ChEBI" id="CHEBI:57540"/>
    </ligand>
</feature>
<feature type="binding site" evidence="1">
    <location>
        <position position="175"/>
    </location>
    <ligand>
        <name>NAD(+)</name>
        <dbReference type="ChEBI" id="CHEBI:57540"/>
    </ligand>
</feature>
<feature type="binding site" evidence="1">
    <location>
        <position position="177"/>
    </location>
    <ligand>
        <name>NAD(+)</name>
        <dbReference type="ChEBI" id="CHEBI:57540"/>
    </ligand>
</feature>
<feature type="binding site" evidence="1">
    <location>
        <begin position="188"/>
        <end position="193"/>
    </location>
    <ligand>
        <name>NAD(+)</name>
        <dbReference type="ChEBI" id="CHEBI:57540"/>
    </ligand>
</feature>
<feature type="binding site" evidence="1">
    <location>
        <position position="247"/>
    </location>
    <ligand>
        <name>NAD(+)</name>
        <dbReference type="ChEBI" id="CHEBI:57540"/>
    </ligand>
</feature>
<comment type="function">
    <text evidence="1">Involved in the regulation of the intracellular balance of NAD and NADP, and is a key enzyme in the biosynthesis of NADP. Catalyzes specifically the phosphorylation on 2'-hydroxyl of the adenosine moiety of NAD to yield NADP.</text>
</comment>
<comment type="catalytic activity">
    <reaction evidence="1">
        <text>NAD(+) + ATP = ADP + NADP(+) + H(+)</text>
        <dbReference type="Rhea" id="RHEA:18629"/>
        <dbReference type="ChEBI" id="CHEBI:15378"/>
        <dbReference type="ChEBI" id="CHEBI:30616"/>
        <dbReference type="ChEBI" id="CHEBI:57540"/>
        <dbReference type="ChEBI" id="CHEBI:58349"/>
        <dbReference type="ChEBI" id="CHEBI:456216"/>
        <dbReference type="EC" id="2.7.1.23"/>
    </reaction>
</comment>
<comment type="cofactor">
    <cofactor evidence="1">
        <name>a divalent metal cation</name>
        <dbReference type="ChEBI" id="CHEBI:60240"/>
    </cofactor>
</comment>
<comment type="subcellular location">
    <subcellularLocation>
        <location evidence="1">Cytoplasm</location>
    </subcellularLocation>
</comment>
<comment type="similarity">
    <text evidence="1">Belongs to the NAD kinase family.</text>
</comment>
<name>NADK_BUCAI</name>
<proteinExistence type="inferred from homology"/>
<accession>P57282</accession>
<protein>
    <recommendedName>
        <fullName evidence="1">NAD kinase</fullName>
        <ecNumber evidence="1">2.7.1.23</ecNumber>
    </recommendedName>
    <alternativeName>
        <fullName evidence="1">ATP-dependent NAD kinase</fullName>
    </alternativeName>
</protein>